<sequence length="304" mass="33695">MIHQRTLKAPVTASGVGLHSGDRIRLTLRPAPPDTGIVFRRTDLPEAADILCSPELVNDTRLSSTLVTPDGVRVGTIEHLMSALAGLGIDNLYVEMTAQETPIMDGSAAPFIYLLQTAGIVEQPAKKRFIRVLEPVGVAEGDKWVRLEPYDGFQVSLEISFDHPAFRLAPQKVDIDFARTSYIDEIARARTFGFMYEVETMARMGLGRGGSLDNAIVIDDEFVLNRDGLRFPDEFVRHKILDAIGDLYIIGHPLIAAFSGYKSGHAMNNQLLRQLLARPSAWEYVTFSHSEDVPSSFHRIPHLA</sequence>
<comment type="function">
    <text evidence="1">Catalyzes the hydrolysis of UDP-3-O-myristoyl-N-acetylglucosamine to form UDP-3-O-myristoylglucosamine and acetate, the committed step in lipid A biosynthesis.</text>
</comment>
<comment type="catalytic activity">
    <reaction evidence="1">
        <text>a UDP-3-O-[(3R)-3-hydroxyacyl]-N-acetyl-alpha-D-glucosamine + H2O = a UDP-3-O-[(3R)-3-hydroxyacyl]-alpha-D-glucosamine + acetate</text>
        <dbReference type="Rhea" id="RHEA:67816"/>
        <dbReference type="ChEBI" id="CHEBI:15377"/>
        <dbReference type="ChEBI" id="CHEBI:30089"/>
        <dbReference type="ChEBI" id="CHEBI:137740"/>
        <dbReference type="ChEBI" id="CHEBI:173225"/>
        <dbReference type="EC" id="3.5.1.108"/>
    </reaction>
</comment>
<comment type="cofactor">
    <cofactor evidence="1">
        <name>Zn(2+)</name>
        <dbReference type="ChEBI" id="CHEBI:29105"/>
    </cofactor>
</comment>
<comment type="pathway">
    <text evidence="1">Glycolipid biosynthesis; lipid IV(A) biosynthesis; lipid IV(A) from (3R)-3-hydroxytetradecanoyl-[acyl-carrier-protein] and UDP-N-acetyl-alpha-D-glucosamine: step 2/6.</text>
</comment>
<comment type="similarity">
    <text evidence="1">Belongs to the LpxC family.</text>
</comment>
<accession>C1D5L0</accession>
<dbReference type="EC" id="3.5.1.108" evidence="1"/>
<dbReference type="EMBL" id="CP001154">
    <property type="protein sequence ID" value="ACO76027.1"/>
    <property type="molecule type" value="Genomic_DNA"/>
</dbReference>
<dbReference type="RefSeq" id="WP_012698490.1">
    <property type="nucleotide sequence ID" value="NC_012559.1"/>
</dbReference>
<dbReference type="SMR" id="C1D5L0"/>
<dbReference type="STRING" id="557598.LHK_03049"/>
<dbReference type="GeneID" id="75108258"/>
<dbReference type="KEGG" id="lhk:LHK_03049"/>
<dbReference type="eggNOG" id="COG0774">
    <property type="taxonomic scope" value="Bacteria"/>
</dbReference>
<dbReference type="HOGENOM" id="CLU_046528_1_0_4"/>
<dbReference type="UniPathway" id="UPA00359">
    <property type="reaction ID" value="UER00478"/>
</dbReference>
<dbReference type="Proteomes" id="UP000002010">
    <property type="component" value="Chromosome"/>
</dbReference>
<dbReference type="GO" id="GO:0016020">
    <property type="term" value="C:membrane"/>
    <property type="evidence" value="ECO:0007669"/>
    <property type="project" value="GOC"/>
</dbReference>
<dbReference type="GO" id="GO:0046872">
    <property type="term" value="F:metal ion binding"/>
    <property type="evidence" value="ECO:0007669"/>
    <property type="project" value="UniProtKB-KW"/>
</dbReference>
<dbReference type="GO" id="GO:0103117">
    <property type="term" value="F:UDP-3-O-acyl-N-acetylglucosamine deacetylase activity"/>
    <property type="evidence" value="ECO:0007669"/>
    <property type="project" value="UniProtKB-UniRule"/>
</dbReference>
<dbReference type="GO" id="GO:0009245">
    <property type="term" value="P:lipid A biosynthetic process"/>
    <property type="evidence" value="ECO:0007669"/>
    <property type="project" value="UniProtKB-UniRule"/>
</dbReference>
<dbReference type="Gene3D" id="3.30.230.20">
    <property type="entry name" value="lpxc deacetylase, domain 1"/>
    <property type="match status" value="1"/>
</dbReference>
<dbReference type="Gene3D" id="3.30.1700.10">
    <property type="entry name" value="lpxc deacetylase, domain 2"/>
    <property type="match status" value="1"/>
</dbReference>
<dbReference type="HAMAP" id="MF_00388">
    <property type="entry name" value="LpxC"/>
    <property type="match status" value="1"/>
</dbReference>
<dbReference type="InterPro" id="IPR020568">
    <property type="entry name" value="Ribosomal_Su5_D2-typ_SF"/>
</dbReference>
<dbReference type="InterPro" id="IPR004463">
    <property type="entry name" value="UDP-acyl_GlcNac_deAcase"/>
</dbReference>
<dbReference type="InterPro" id="IPR011334">
    <property type="entry name" value="UDP-acyl_GlcNac_deAcase_C"/>
</dbReference>
<dbReference type="InterPro" id="IPR015870">
    <property type="entry name" value="UDP-acyl_N-AcGlcN_deAcase_N"/>
</dbReference>
<dbReference type="NCBIfam" id="TIGR00325">
    <property type="entry name" value="lpxC"/>
    <property type="match status" value="1"/>
</dbReference>
<dbReference type="PANTHER" id="PTHR33694">
    <property type="entry name" value="UDP-3-O-ACYL-N-ACETYLGLUCOSAMINE DEACETYLASE 1, MITOCHONDRIAL-RELATED"/>
    <property type="match status" value="1"/>
</dbReference>
<dbReference type="PANTHER" id="PTHR33694:SF1">
    <property type="entry name" value="UDP-3-O-ACYL-N-ACETYLGLUCOSAMINE DEACETYLASE 1, MITOCHONDRIAL-RELATED"/>
    <property type="match status" value="1"/>
</dbReference>
<dbReference type="Pfam" id="PF03331">
    <property type="entry name" value="LpxC"/>
    <property type="match status" value="1"/>
</dbReference>
<dbReference type="SUPFAM" id="SSF54211">
    <property type="entry name" value="Ribosomal protein S5 domain 2-like"/>
    <property type="match status" value="2"/>
</dbReference>
<organism>
    <name type="scientific">Laribacter hongkongensis (strain HLHK9)</name>
    <dbReference type="NCBI Taxonomy" id="557598"/>
    <lineage>
        <taxon>Bacteria</taxon>
        <taxon>Pseudomonadati</taxon>
        <taxon>Pseudomonadota</taxon>
        <taxon>Betaproteobacteria</taxon>
        <taxon>Neisseriales</taxon>
        <taxon>Aquaspirillaceae</taxon>
        <taxon>Laribacter</taxon>
    </lineage>
</organism>
<evidence type="ECO:0000255" key="1">
    <source>
        <dbReference type="HAMAP-Rule" id="MF_00388"/>
    </source>
</evidence>
<reference key="1">
    <citation type="journal article" date="2009" name="PLoS Genet.">
        <title>The complete genome and proteome of Laribacter hongkongensis reveal potential mechanisms for adaptations to different temperatures and habitats.</title>
        <authorList>
            <person name="Woo P.C.Y."/>
            <person name="Lau S.K.P."/>
            <person name="Tse H."/>
            <person name="Teng J.L.L."/>
            <person name="Curreem S.O."/>
            <person name="Tsang A.K.L."/>
            <person name="Fan R.Y.Y."/>
            <person name="Wong G.K.M."/>
            <person name="Huang Y."/>
            <person name="Loman N.J."/>
            <person name="Snyder L.A.S."/>
            <person name="Cai J.J."/>
            <person name="Huang J.-D."/>
            <person name="Mak W."/>
            <person name="Pallen M.J."/>
            <person name="Lok S."/>
            <person name="Yuen K.-Y."/>
        </authorList>
    </citation>
    <scope>NUCLEOTIDE SEQUENCE [LARGE SCALE GENOMIC DNA]</scope>
    <source>
        <strain>HLHK9</strain>
    </source>
</reference>
<protein>
    <recommendedName>
        <fullName evidence="1">UDP-3-O-acyl-N-acetylglucosamine deacetylase</fullName>
        <shortName evidence="1">UDP-3-O-acyl-GlcNAc deacetylase</shortName>
        <ecNumber evidence="1">3.5.1.108</ecNumber>
    </recommendedName>
    <alternativeName>
        <fullName evidence="1">UDP-3-O-[R-3-hydroxymyristoyl]-N-acetylglucosamine deacetylase</fullName>
    </alternativeName>
</protein>
<feature type="chain" id="PRO_1000134399" description="UDP-3-O-acyl-N-acetylglucosamine deacetylase">
    <location>
        <begin position="1"/>
        <end position="304"/>
    </location>
</feature>
<feature type="active site" description="Proton donor" evidence="1">
    <location>
        <position position="265"/>
    </location>
</feature>
<feature type="binding site" evidence="1">
    <location>
        <position position="79"/>
    </location>
    <ligand>
        <name>Zn(2+)</name>
        <dbReference type="ChEBI" id="CHEBI:29105"/>
    </ligand>
</feature>
<feature type="binding site" evidence="1">
    <location>
        <position position="238"/>
    </location>
    <ligand>
        <name>Zn(2+)</name>
        <dbReference type="ChEBI" id="CHEBI:29105"/>
    </ligand>
</feature>
<feature type="binding site" evidence="1">
    <location>
        <position position="242"/>
    </location>
    <ligand>
        <name>Zn(2+)</name>
        <dbReference type="ChEBI" id="CHEBI:29105"/>
    </ligand>
</feature>
<gene>
    <name evidence="1" type="primary">lpxC</name>
    <name type="ordered locus">LHK_03049</name>
</gene>
<name>LPXC_LARHH</name>
<keyword id="KW-0378">Hydrolase</keyword>
<keyword id="KW-0441">Lipid A biosynthesis</keyword>
<keyword id="KW-0444">Lipid biosynthesis</keyword>
<keyword id="KW-0443">Lipid metabolism</keyword>
<keyword id="KW-0479">Metal-binding</keyword>
<keyword id="KW-1185">Reference proteome</keyword>
<keyword id="KW-0862">Zinc</keyword>
<proteinExistence type="inferred from homology"/>